<organism>
    <name type="scientific">Arabidopsis thaliana</name>
    <name type="common">Mouse-ear cress</name>
    <dbReference type="NCBI Taxonomy" id="3702"/>
    <lineage>
        <taxon>Eukaryota</taxon>
        <taxon>Viridiplantae</taxon>
        <taxon>Streptophyta</taxon>
        <taxon>Embryophyta</taxon>
        <taxon>Tracheophyta</taxon>
        <taxon>Spermatophyta</taxon>
        <taxon>Magnoliopsida</taxon>
        <taxon>eudicotyledons</taxon>
        <taxon>Gunneridae</taxon>
        <taxon>Pentapetalae</taxon>
        <taxon>rosids</taxon>
        <taxon>malvids</taxon>
        <taxon>Brassicales</taxon>
        <taxon>Brassicaceae</taxon>
        <taxon>Camelineae</taxon>
        <taxon>Arabidopsis</taxon>
    </lineage>
</organism>
<feature type="chain" id="PRO_0000420805" description="Probable mitochondrial adenine nucleotide transporter BTL3">
    <location>
        <begin position="1"/>
        <end position="428"/>
    </location>
</feature>
<feature type="transmembrane region" description="Helical; Name=1" evidence="2">
    <location>
        <begin position="132"/>
        <end position="152"/>
    </location>
</feature>
<feature type="transmembrane region" description="Helical; Name=2" evidence="2">
    <location>
        <begin position="187"/>
        <end position="207"/>
    </location>
</feature>
<feature type="transmembrane region" description="Helical; Name=3" evidence="2">
    <location>
        <begin position="228"/>
        <end position="248"/>
    </location>
</feature>
<feature type="transmembrane region" description="Helical; Name=4" evidence="2">
    <location>
        <begin position="283"/>
        <end position="303"/>
    </location>
</feature>
<feature type="transmembrane region" description="Helical; Name=5" evidence="2">
    <location>
        <begin position="342"/>
        <end position="362"/>
    </location>
</feature>
<feature type="transmembrane region" description="Helical; Name=6" evidence="2">
    <location>
        <begin position="390"/>
        <end position="410"/>
    </location>
</feature>
<feature type="repeat" description="Solcar 1">
    <location>
        <begin position="129"/>
        <end position="212"/>
    </location>
</feature>
<feature type="repeat" description="Solcar 2">
    <location>
        <begin position="222"/>
        <end position="307"/>
    </location>
</feature>
<feature type="repeat" description="Solcar 3">
    <location>
        <begin position="336"/>
        <end position="421"/>
    </location>
</feature>
<reference key="1">
    <citation type="journal article" date="2000" name="DNA Res.">
        <title>Structural analysis of Arabidopsis thaliana chromosome 5. X. Sequence features of the regions of 3,076,755 bp covered by sixty P1 and TAC clones.</title>
        <authorList>
            <person name="Sato S."/>
            <person name="Nakamura Y."/>
            <person name="Kaneko T."/>
            <person name="Katoh T."/>
            <person name="Asamizu E."/>
            <person name="Kotani H."/>
            <person name="Tabata S."/>
        </authorList>
    </citation>
    <scope>NUCLEOTIDE SEQUENCE [LARGE SCALE GENOMIC DNA]</scope>
    <source>
        <strain>cv. Columbia</strain>
    </source>
</reference>
<reference key="2">
    <citation type="journal article" date="2017" name="Plant J.">
        <title>Araport11: a complete reannotation of the Arabidopsis thaliana reference genome.</title>
        <authorList>
            <person name="Cheng C.Y."/>
            <person name="Krishnakumar V."/>
            <person name="Chan A.P."/>
            <person name="Thibaud-Nissen F."/>
            <person name="Schobel S."/>
            <person name="Town C.D."/>
        </authorList>
    </citation>
    <scope>GENOME REANNOTATION</scope>
    <source>
        <strain>cv. Columbia</strain>
    </source>
</reference>
<reference key="3">
    <citation type="journal article" date="2003" name="Science">
        <title>Empirical analysis of transcriptional activity in the Arabidopsis genome.</title>
        <authorList>
            <person name="Yamada K."/>
            <person name="Lim J."/>
            <person name="Dale J.M."/>
            <person name="Chen H."/>
            <person name="Shinn P."/>
            <person name="Palm C.J."/>
            <person name="Southwick A.M."/>
            <person name="Wu H.C."/>
            <person name="Kim C.J."/>
            <person name="Nguyen M."/>
            <person name="Pham P.K."/>
            <person name="Cheuk R.F."/>
            <person name="Karlin-Newmann G."/>
            <person name="Liu S.X."/>
            <person name="Lam B."/>
            <person name="Sakano H."/>
            <person name="Wu T."/>
            <person name="Yu G."/>
            <person name="Miranda M."/>
            <person name="Quach H.L."/>
            <person name="Tripp M."/>
            <person name="Chang C.H."/>
            <person name="Lee J.M."/>
            <person name="Toriumi M.J."/>
            <person name="Chan M.M."/>
            <person name="Tang C.C."/>
            <person name="Onodera C.S."/>
            <person name="Deng J.M."/>
            <person name="Akiyama K."/>
            <person name="Ansari Y."/>
            <person name="Arakawa T."/>
            <person name="Banh J."/>
            <person name="Banno F."/>
            <person name="Bowser L."/>
            <person name="Brooks S.Y."/>
            <person name="Carninci P."/>
            <person name="Chao Q."/>
            <person name="Choy N."/>
            <person name="Enju A."/>
            <person name="Goldsmith A.D."/>
            <person name="Gurjal M."/>
            <person name="Hansen N.F."/>
            <person name="Hayashizaki Y."/>
            <person name="Johnson-Hopson C."/>
            <person name="Hsuan V.W."/>
            <person name="Iida K."/>
            <person name="Karnes M."/>
            <person name="Khan S."/>
            <person name="Koesema E."/>
            <person name="Ishida J."/>
            <person name="Jiang P.X."/>
            <person name="Jones T."/>
            <person name="Kawai J."/>
            <person name="Kamiya A."/>
            <person name="Meyers C."/>
            <person name="Nakajima M."/>
            <person name="Narusaka M."/>
            <person name="Seki M."/>
            <person name="Sakurai T."/>
            <person name="Satou M."/>
            <person name="Tamse R."/>
            <person name="Vaysberg M."/>
            <person name="Wallender E.K."/>
            <person name="Wong C."/>
            <person name="Yamamura Y."/>
            <person name="Yuan S."/>
            <person name="Shinozaki K."/>
            <person name="Davis R.W."/>
            <person name="Theologis A."/>
            <person name="Ecker J.R."/>
        </authorList>
    </citation>
    <scope>NUCLEOTIDE SEQUENCE [LARGE SCALE MRNA]</scope>
    <source>
        <strain>cv. Columbia</strain>
    </source>
</reference>
<reference key="4">
    <citation type="submission" date="2004-10" db="EMBL/GenBank/DDBJ databases">
        <title>Arabidopsis ORF clones.</title>
        <authorList>
            <person name="Shinn P."/>
            <person name="Chen H."/>
            <person name="Cheuk R.F."/>
            <person name="Kim C.J."/>
            <person name="Ecker J.R."/>
        </authorList>
    </citation>
    <scope>NUCLEOTIDE SEQUENCE [LARGE SCALE MRNA]</scope>
    <source>
        <strain>cv. Columbia</strain>
    </source>
</reference>
<reference key="5">
    <citation type="submission" date="2006-07" db="EMBL/GenBank/DDBJ databases">
        <title>Large-scale analysis of RIKEN Arabidopsis full-length (RAFL) cDNAs.</title>
        <authorList>
            <person name="Totoki Y."/>
            <person name="Seki M."/>
            <person name="Ishida J."/>
            <person name="Nakajima M."/>
            <person name="Enju A."/>
            <person name="Kamiya A."/>
            <person name="Narusaka M."/>
            <person name="Shin-i T."/>
            <person name="Nakagawa M."/>
            <person name="Sakamoto N."/>
            <person name="Oishi K."/>
            <person name="Kohara Y."/>
            <person name="Kobayashi M."/>
            <person name="Toyoda A."/>
            <person name="Sakaki Y."/>
            <person name="Sakurai T."/>
            <person name="Iida K."/>
            <person name="Akiyama K."/>
            <person name="Satou M."/>
            <person name="Toyoda T."/>
            <person name="Konagaya A."/>
            <person name="Carninci P."/>
            <person name="Kawai J."/>
            <person name="Hayashizaki Y."/>
            <person name="Shinozaki K."/>
        </authorList>
    </citation>
    <scope>NUCLEOTIDE SEQUENCE [LARGE SCALE MRNA]</scope>
    <source>
        <strain>cv. Columbia</strain>
    </source>
</reference>
<reference key="6">
    <citation type="journal article" date="2004" name="Trends Plant Sci.">
        <title>The growing family of mitochondrial carriers in Arabidopsis.</title>
        <authorList>
            <person name="Picault N."/>
            <person name="Hodges M."/>
            <person name="Palmieri L."/>
            <person name="Palmieri F."/>
        </authorList>
    </citation>
    <scope>GENE FAMILY</scope>
</reference>
<sequence length="428" mass="46818">MRGLDRWIAEAIRSESLDHNGQIICGGLFLEESLPSSSVSFLSSKDCSVNSCRFSQKSSFLKFRRRNGTREPLFLSVSLSINESNGEEEEGEGYNGQNGFKSEKGSVLIGGGQESKEKRRVKENGAGALNTTKHLWAGAFAAMVSRTCIAPLERMKLEYIVRGEQGNLLELIQRIATNEGIRGFWKGNLVNILRTAPFKSINFYAYDTYRGQLLKLSGNEETTNFERFVAGAAAGVTASLLCLPLDTIRTVMVAPGGEALGGVVGAFRHMIQTEGFFSLYKGLVPSLVSMAPSGAVFYGVYDILKSAYLHTPEGKKRLEHMKQEGEELNAFDQLELGPMRTLLYGAIAGACSEAATYPFEVVRRRLQMQSHAKRLSAVATCVKIIEQGGVPALYAGLIPSLLQVLPSAAISYFVYEFMKVVLKVESSA</sequence>
<accession>Q9LV81</accession>
<proteinExistence type="evidence at transcript level"/>
<name>BRTL3_ARATH</name>
<protein>
    <recommendedName>
        <fullName>Probable mitochondrial adenine nucleotide transporter BTL3</fullName>
    </recommendedName>
    <alternativeName>
        <fullName>Adenine nucleotide transporter BT1-like protein 3</fullName>
    </alternativeName>
</protein>
<evidence type="ECO:0000250" key="1"/>
<evidence type="ECO:0000255" key="2"/>
<evidence type="ECO:0000305" key="3"/>
<comment type="function">
    <text evidence="1">Probable mitochondrial adenylate carrier that catalyzes the transport of ATP, ADP and AMP.</text>
</comment>
<comment type="subcellular location">
    <subcellularLocation>
        <location evidence="1">Mitochondrion inner membrane</location>
        <topology evidence="1">Multi-pass membrane protein</topology>
    </subcellularLocation>
</comment>
<comment type="similarity">
    <text evidence="3">Belongs to the mitochondrial carrier (TC 2.A.29) family.</text>
</comment>
<dbReference type="EMBL" id="AB019236">
    <property type="protein sequence ID" value="BAA97309.1"/>
    <property type="molecule type" value="Genomic_DNA"/>
</dbReference>
<dbReference type="EMBL" id="CP002688">
    <property type="protein sequence ID" value="AED97977.1"/>
    <property type="molecule type" value="Genomic_DNA"/>
</dbReference>
<dbReference type="EMBL" id="BT008613">
    <property type="protein sequence ID" value="AAP40437.1"/>
    <property type="molecule type" value="mRNA"/>
</dbReference>
<dbReference type="EMBL" id="BT015788">
    <property type="protein sequence ID" value="AAU90078.1"/>
    <property type="molecule type" value="mRNA"/>
</dbReference>
<dbReference type="EMBL" id="AK228570">
    <property type="protein sequence ID" value="BAF00488.1"/>
    <property type="molecule type" value="mRNA"/>
</dbReference>
<dbReference type="RefSeq" id="NP_201302.1">
    <property type="nucleotide sequence ID" value="NM_125896.3"/>
</dbReference>
<dbReference type="SMR" id="Q9LV81"/>
<dbReference type="FunCoup" id="Q9LV81">
    <property type="interactions" value="710"/>
</dbReference>
<dbReference type="STRING" id="3702.Q9LV81"/>
<dbReference type="PaxDb" id="3702-AT5G64970.1"/>
<dbReference type="EnsemblPlants" id="AT5G64970.1">
    <property type="protein sequence ID" value="AT5G64970.1"/>
    <property type="gene ID" value="AT5G64970"/>
</dbReference>
<dbReference type="GeneID" id="836621"/>
<dbReference type="Gramene" id="AT5G64970.1">
    <property type="protein sequence ID" value="AT5G64970.1"/>
    <property type="gene ID" value="AT5G64970"/>
</dbReference>
<dbReference type="KEGG" id="ath:AT5G64970"/>
<dbReference type="Araport" id="AT5G64970"/>
<dbReference type="TAIR" id="AT5G64970"/>
<dbReference type="eggNOG" id="KOG0752">
    <property type="taxonomic scope" value="Eukaryota"/>
</dbReference>
<dbReference type="HOGENOM" id="CLU_015166_10_4_1"/>
<dbReference type="InParanoid" id="Q9LV81"/>
<dbReference type="PhylomeDB" id="Q9LV81"/>
<dbReference type="PRO" id="PR:Q9LV81"/>
<dbReference type="Proteomes" id="UP000006548">
    <property type="component" value="Chromosome 5"/>
</dbReference>
<dbReference type="ExpressionAtlas" id="Q9LV81">
    <property type="expression patterns" value="baseline and differential"/>
</dbReference>
<dbReference type="GO" id="GO:0005743">
    <property type="term" value="C:mitochondrial inner membrane"/>
    <property type="evidence" value="ECO:0007669"/>
    <property type="project" value="UniProtKB-SubCell"/>
</dbReference>
<dbReference type="GO" id="GO:0009536">
    <property type="term" value="C:plastid"/>
    <property type="evidence" value="ECO:0007005"/>
    <property type="project" value="TAIR"/>
</dbReference>
<dbReference type="GO" id="GO:0055085">
    <property type="term" value="P:transmembrane transport"/>
    <property type="evidence" value="ECO:0007669"/>
    <property type="project" value="InterPro"/>
</dbReference>
<dbReference type="FunFam" id="1.50.40.10:FF:000098">
    <property type="entry name" value="Mitochondrial substrate carrier family protein"/>
    <property type="match status" value="1"/>
</dbReference>
<dbReference type="Gene3D" id="1.50.40.10">
    <property type="entry name" value="Mitochondrial carrier domain"/>
    <property type="match status" value="1"/>
</dbReference>
<dbReference type="InterPro" id="IPR002067">
    <property type="entry name" value="Mit_carrier"/>
</dbReference>
<dbReference type="InterPro" id="IPR018108">
    <property type="entry name" value="Mitochondrial_sb/sol_carrier"/>
</dbReference>
<dbReference type="InterPro" id="IPR023395">
    <property type="entry name" value="Mt_carrier_dom_sf"/>
</dbReference>
<dbReference type="PANTHER" id="PTHR24089">
    <property type="entry name" value="SOLUTE CARRIER FAMILY 25"/>
    <property type="match status" value="1"/>
</dbReference>
<dbReference type="Pfam" id="PF00153">
    <property type="entry name" value="Mito_carr"/>
    <property type="match status" value="3"/>
</dbReference>
<dbReference type="PRINTS" id="PR00926">
    <property type="entry name" value="MITOCARRIER"/>
</dbReference>
<dbReference type="SUPFAM" id="SSF103506">
    <property type="entry name" value="Mitochondrial carrier"/>
    <property type="match status" value="1"/>
</dbReference>
<dbReference type="PROSITE" id="PS50920">
    <property type="entry name" value="SOLCAR"/>
    <property type="match status" value="3"/>
</dbReference>
<gene>
    <name type="ordered locus">At5g64970</name>
    <name type="ORF">MXK3.20</name>
</gene>
<keyword id="KW-0472">Membrane</keyword>
<keyword id="KW-0496">Mitochondrion</keyword>
<keyword id="KW-0999">Mitochondrion inner membrane</keyword>
<keyword id="KW-1185">Reference proteome</keyword>
<keyword id="KW-0677">Repeat</keyword>
<keyword id="KW-0812">Transmembrane</keyword>
<keyword id="KW-1133">Transmembrane helix</keyword>
<keyword id="KW-0813">Transport</keyword>